<proteinExistence type="inferred from homology"/>
<comment type="catalytic activity">
    <reaction evidence="1">
        <text>tRNA(Phe) + L-phenylalanine + ATP = L-phenylalanyl-tRNA(Phe) + AMP + diphosphate + H(+)</text>
        <dbReference type="Rhea" id="RHEA:19413"/>
        <dbReference type="Rhea" id="RHEA-COMP:9668"/>
        <dbReference type="Rhea" id="RHEA-COMP:9699"/>
        <dbReference type="ChEBI" id="CHEBI:15378"/>
        <dbReference type="ChEBI" id="CHEBI:30616"/>
        <dbReference type="ChEBI" id="CHEBI:33019"/>
        <dbReference type="ChEBI" id="CHEBI:58095"/>
        <dbReference type="ChEBI" id="CHEBI:78442"/>
        <dbReference type="ChEBI" id="CHEBI:78531"/>
        <dbReference type="ChEBI" id="CHEBI:456215"/>
        <dbReference type="EC" id="6.1.1.20"/>
    </reaction>
</comment>
<comment type="cofactor">
    <cofactor evidence="1">
        <name>Mg(2+)</name>
        <dbReference type="ChEBI" id="CHEBI:18420"/>
    </cofactor>
    <text evidence="1">Binds 2 magnesium ions per tetramer.</text>
</comment>
<comment type="subunit">
    <text evidence="1">Tetramer of two alpha and two beta subunits.</text>
</comment>
<comment type="subcellular location">
    <subcellularLocation>
        <location evidence="1">Cytoplasm</location>
    </subcellularLocation>
</comment>
<comment type="similarity">
    <text evidence="1">Belongs to the class-II aminoacyl-tRNA synthetase family. Phe-tRNA synthetase alpha subunit type 1 subfamily.</text>
</comment>
<feature type="chain" id="PRO_1000006862" description="Phenylalanine--tRNA ligase alpha subunit">
    <location>
        <begin position="1"/>
        <end position="341"/>
    </location>
</feature>
<feature type="binding site" evidence="1">
    <location>
        <position position="259"/>
    </location>
    <ligand>
        <name>Mg(2+)</name>
        <dbReference type="ChEBI" id="CHEBI:18420"/>
        <note>shared with beta subunit</note>
    </ligand>
</feature>
<sequence>MLSPEALTTAVDAAQQAIALADTLDVLARVKTEHLGDRSPLALARQALAVLPKEQRAEAGKRVNAARNAAQRSYDERLATLRAERDAAVLVAEGIDVTLPSTRVPAGARHPIIMLAEHVADTFIAMGWELAEGPEVETEQFNFDALNFPADHPARGEQDTFYIAPEDSRQLLRTHTSPVQIRTLLARELPVYIISIGRTFRTDELDATHTPIFHQVEGLAVDRGLSMAHLRGTLDAFARAEFGPSARTRIRPHFFPFTEPSAEVDVWFANKIGGAAWVEWGGCGMVHPNVLRATGIDPDLYSGFAFGMGLERTLQFRNGIPDMRDMVEGDVRFSLPFGVGA</sequence>
<accession>A5U306</accession>
<evidence type="ECO:0000255" key="1">
    <source>
        <dbReference type="HAMAP-Rule" id="MF_00281"/>
    </source>
</evidence>
<keyword id="KW-0030">Aminoacyl-tRNA synthetase</keyword>
<keyword id="KW-0067">ATP-binding</keyword>
<keyword id="KW-0963">Cytoplasm</keyword>
<keyword id="KW-0436">Ligase</keyword>
<keyword id="KW-0460">Magnesium</keyword>
<keyword id="KW-0479">Metal-binding</keyword>
<keyword id="KW-0547">Nucleotide-binding</keyword>
<keyword id="KW-0648">Protein biosynthesis</keyword>
<keyword id="KW-1185">Reference proteome</keyword>
<reference key="1">
    <citation type="journal article" date="2008" name="PLoS ONE">
        <title>Genetic basis of virulence attenuation revealed by comparative genomic analysis of Mycobacterium tuberculosis strain H37Ra versus H37Rv.</title>
        <authorList>
            <person name="Zheng H."/>
            <person name="Lu L."/>
            <person name="Wang B."/>
            <person name="Pu S."/>
            <person name="Zhang X."/>
            <person name="Zhu G."/>
            <person name="Shi W."/>
            <person name="Zhang L."/>
            <person name="Wang H."/>
            <person name="Wang S."/>
            <person name="Zhao G."/>
            <person name="Zhang Y."/>
        </authorList>
    </citation>
    <scope>NUCLEOTIDE SEQUENCE [LARGE SCALE GENOMIC DNA]</scope>
    <source>
        <strain>ATCC 25177 / H37Ra</strain>
    </source>
</reference>
<protein>
    <recommendedName>
        <fullName evidence="1">Phenylalanine--tRNA ligase alpha subunit</fullName>
        <ecNumber evidence="1">6.1.1.20</ecNumber>
    </recommendedName>
    <alternativeName>
        <fullName evidence="1">Phenylalanyl-tRNA synthetase alpha subunit</fullName>
        <shortName evidence="1">PheRS</shortName>
    </alternativeName>
</protein>
<dbReference type="EC" id="6.1.1.20" evidence="1"/>
<dbReference type="EMBL" id="CP000611">
    <property type="protein sequence ID" value="ABQ73406.1"/>
    <property type="molecule type" value="Genomic_DNA"/>
</dbReference>
<dbReference type="SMR" id="A5U306"/>
<dbReference type="KEGG" id="mra:MRA_1660"/>
<dbReference type="eggNOG" id="COG0016">
    <property type="taxonomic scope" value="Bacteria"/>
</dbReference>
<dbReference type="HOGENOM" id="CLU_025086_0_0_11"/>
<dbReference type="Proteomes" id="UP000001988">
    <property type="component" value="Chromosome"/>
</dbReference>
<dbReference type="GO" id="GO:0005737">
    <property type="term" value="C:cytoplasm"/>
    <property type="evidence" value="ECO:0007669"/>
    <property type="project" value="UniProtKB-SubCell"/>
</dbReference>
<dbReference type="GO" id="GO:0005524">
    <property type="term" value="F:ATP binding"/>
    <property type="evidence" value="ECO:0007669"/>
    <property type="project" value="UniProtKB-UniRule"/>
</dbReference>
<dbReference type="GO" id="GO:0000287">
    <property type="term" value="F:magnesium ion binding"/>
    <property type="evidence" value="ECO:0007669"/>
    <property type="project" value="UniProtKB-UniRule"/>
</dbReference>
<dbReference type="GO" id="GO:0004826">
    <property type="term" value="F:phenylalanine-tRNA ligase activity"/>
    <property type="evidence" value="ECO:0007669"/>
    <property type="project" value="UniProtKB-UniRule"/>
</dbReference>
<dbReference type="GO" id="GO:0000049">
    <property type="term" value="F:tRNA binding"/>
    <property type="evidence" value="ECO:0007669"/>
    <property type="project" value="InterPro"/>
</dbReference>
<dbReference type="GO" id="GO:0006432">
    <property type="term" value="P:phenylalanyl-tRNA aminoacylation"/>
    <property type="evidence" value="ECO:0007669"/>
    <property type="project" value="UniProtKB-UniRule"/>
</dbReference>
<dbReference type="CDD" id="cd00496">
    <property type="entry name" value="PheRS_alpha_core"/>
    <property type="match status" value="1"/>
</dbReference>
<dbReference type="FunFam" id="3.30.930.10:FF:000003">
    <property type="entry name" value="Phenylalanine--tRNA ligase alpha subunit"/>
    <property type="match status" value="1"/>
</dbReference>
<dbReference type="Gene3D" id="3.30.930.10">
    <property type="entry name" value="Bira Bifunctional Protein, Domain 2"/>
    <property type="match status" value="1"/>
</dbReference>
<dbReference type="HAMAP" id="MF_00281">
    <property type="entry name" value="Phe_tRNA_synth_alpha1"/>
    <property type="match status" value="1"/>
</dbReference>
<dbReference type="InterPro" id="IPR006195">
    <property type="entry name" value="aa-tRNA-synth_II"/>
</dbReference>
<dbReference type="InterPro" id="IPR045864">
    <property type="entry name" value="aa-tRNA-synth_II/BPL/LPL"/>
</dbReference>
<dbReference type="InterPro" id="IPR004529">
    <property type="entry name" value="Phe-tRNA-synth_IIc_asu"/>
</dbReference>
<dbReference type="InterPro" id="IPR004188">
    <property type="entry name" value="Phe-tRNA_ligase_II_N"/>
</dbReference>
<dbReference type="InterPro" id="IPR022911">
    <property type="entry name" value="Phe_tRNA_ligase_alpha1_bac"/>
</dbReference>
<dbReference type="InterPro" id="IPR002319">
    <property type="entry name" value="Phenylalanyl-tRNA_Synthase"/>
</dbReference>
<dbReference type="InterPro" id="IPR010978">
    <property type="entry name" value="tRNA-bd_arm"/>
</dbReference>
<dbReference type="NCBIfam" id="TIGR00468">
    <property type="entry name" value="pheS"/>
    <property type="match status" value="1"/>
</dbReference>
<dbReference type="PANTHER" id="PTHR11538:SF41">
    <property type="entry name" value="PHENYLALANINE--TRNA LIGASE, MITOCHONDRIAL"/>
    <property type="match status" value="1"/>
</dbReference>
<dbReference type="PANTHER" id="PTHR11538">
    <property type="entry name" value="PHENYLALANYL-TRNA SYNTHETASE"/>
    <property type="match status" value="1"/>
</dbReference>
<dbReference type="Pfam" id="PF02912">
    <property type="entry name" value="Phe_tRNA-synt_N"/>
    <property type="match status" value="1"/>
</dbReference>
<dbReference type="Pfam" id="PF01409">
    <property type="entry name" value="tRNA-synt_2d"/>
    <property type="match status" value="1"/>
</dbReference>
<dbReference type="SUPFAM" id="SSF55681">
    <property type="entry name" value="Class II aaRS and biotin synthetases"/>
    <property type="match status" value="1"/>
</dbReference>
<dbReference type="SUPFAM" id="SSF46589">
    <property type="entry name" value="tRNA-binding arm"/>
    <property type="match status" value="1"/>
</dbReference>
<dbReference type="PROSITE" id="PS50862">
    <property type="entry name" value="AA_TRNA_LIGASE_II"/>
    <property type="match status" value="1"/>
</dbReference>
<gene>
    <name evidence="1" type="primary">pheS</name>
    <name type="ordered locus">MRA_1660</name>
</gene>
<name>SYFA_MYCTA</name>
<organism>
    <name type="scientific">Mycobacterium tuberculosis (strain ATCC 25177 / H37Ra)</name>
    <dbReference type="NCBI Taxonomy" id="419947"/>
    <lineage>
        <taxon>Bacteria</taxon>
        <taxon>Bacillati</taxon>
        <taxon>Actinomycetota</taxon>
        <taxon>Actinomycetes</taxon>
        <taxon>Mycobacteriales</taxon>
        <taxon>Mycobacteriaceae</taxon>
        <taxon>Mycobacterium</taxon>
        <taxon>Mycobacterium tuberculosis complex</taxon>
    </lineage>
</organism>